<gene>
    <name type="primary">UBB</name>
</gene>
<reference key="1">
    <citation type="journal article" date="2003" name="J. Mol. Evol.">
        <title>Lineage-specific homogenization of the polyubiquitin gene among human and great apes.</title>
        <authorList>
            <person name="Tachikui H."/>
            <person name="Saitou N."/>
            <person name="Nakajima T."/>
            <person name="Hayasaka I."/>
            <person name="Ishida T."/>
            <person name="Inoue I."/>
        </authorList>
    </citation>
    <scope>NUCLEOTIDE SEQUENCE [GENOMIC DNA]</scope>
</reference>
<name>UBB_GORGO</name>
<protein>
    <recommendedName>
        <fullName>Polyubiquitin-B</fullName>
    </recommendedName>
    <component>
        <recommendedName>
            <fullName>Ubiquitin</fullName>
        </recommendedName>
    </component>
</protein>
<organism>
    <name type="scientific">Gorilla gorilla gorilla</name>
    <name type="common">Western lowland gorilla</name>
    <dbReference type="NCBI Taxonomy" id="9595"/>
    <lineage>
        <taxon>Eukaryota</taxon>
        <taxon>Metazoa</taxon>
        <taxon>Chordata</taxon>
        <taxon>Craniata</taxon>
        <taxon>Vertebrata</taxon>
        <taxon>Euteleostomi</taxon>
        <taxon>Mammalia</taxon>
        <taxon>Eutheria</taxon>
        <taxon>Euarchontoglires</taxon>
        <taxon>Primates</taxon>
        <taxon>Haplorrhini</taxon>
        <taxon>Catarrhini</taxon>
        <taxon>Hominidae</taxon>
        <taxon>Gorilla</taxon>
    </lineage>
</organism>
<comment type="function">
    <molecule>Ubiquitin</molecule>
    <text evidence="2">Exists either covalently attached to another protein, or free (unanchored). When covalently bound, it is conjugated to target proteins via an isopeptide bond either as a monomer (monoubiquitin), a polymer linked via different Lys residues of the ubiquitin (polyubiquitin chains) or a linear polymer linked via the initiator Met of the ubiquitin (linear polyubiquitin chains). Polyubiquitin chains, when attached to a target protein, have different functions depending on the Lys residue of the ubiquitin that is linked: Lys-6-linked may be involved in DNA repair; Lys-11-linked is involved in ERAD (endoplasmic reticulum-associated degradation) and in cell-cycle regulation; Lys-29-linked is involved in proteotoxic stress response and cell cycle; Lys-33-linked is involved in kinase modification; Lys-48-linked is involved in protein degradation via the proteasome; Lys-63-linked is involved in endocytosis, DNA-damage responses as well as in signaling processes leading to activation of the transcription factor NF-kappa-B. Linear polymer chains formed via attachment by the initiator Met lead to cell signaling. Ubiquitin is usually conjugated to Lys residues of target proteins, however, in rare cases, conjugation to Cys or Ser residues has been observed. When polyubiquitin is free (unanchored-polyubiquitin), it also has distinct roles, such as in activation of protein kinases, and in signaling.</text>
</comment>
<comment type="subunit">
    <text evidence="2">Interacts with SKP1-KMD2A and SKP1-KMD2B complexes.</text>
</comment>
<comment type="subcellular location">
    <molecule>Ubiquitin</molecule>
    <subcellularLocation>
        <location evidence="1">Cytoplasm</location>
    </subcellularLocation>
    <subcellularLocation>
        <location evidence="1">Nucleus</location>
    </subcellularLocation>
    <subcellularLocation>
        <location evidence="2">Mitochondrion outer membrane</location>
        <topology evidence="2">Peripheral membrane protein</topology>
    </subcellularLocation>
</comment>
<comment type="PTM">
    <molecule>Ubiquitin</molecule>
    <text evidence="2">Phosphorylated at Ser-65 by PINK1 during mitophagy. Phosphorylated ubiquitin specifically binds and activates parkin (PRKN), triggering mitophagy. Phosphorylation does not affect E1-mediated E2 charging of ubiquitin but affects discharging of E2 enzymes to form polyubiquitin chains. It also affects deubiquitination by deubiquitinase enzymes such as USP30.</text>
</comment>
<comment type="PTM">
    <molecule>Ubiquitin</molecule>
    <text evidence="2">Mono-ADP-ribosylated at the C-terminus by PARP9, a component of the PPAR9-DTX3L complex. ADP-ribosylation requires processing by E1 and E2 enzymes and prevents ubiquitin conjugation to substrates such as histones.</text>
</comment>
<comment type="miscellaneous">
    <text>Ubiquitin is encoded by 4 different genes. UBA52 and RPS27A genes code for a single copy of ubiquitin fused to the ribosomal proteins eL40 and eS31, respectively. UBB and UBC genes code for a polyubiquitin precursor with exact head to tail repeats, the number of repeats differ between species and strains.</text>
</comment>
<comment type="miscellaneous">
    <text>For the sake of clarity sequence features are annotated only for the first chain, and are not repeated for each of the following chains.</text>
</comment>
<comment type="similarity">
    <text evidence="4">Belongs to the ubiquitin family.</text>
</comment>
<evidence type="ECO:0000250" key="1"/>
<evidence type="ECO:0000250" key="2">
    <source>
        <dbReference type="UniProtKB" id="P0CG47"/>
    </source>
</evidence>
<evidence type="ECO:0000255" key="3">
    <source>
        <dbReference type="PROSITE-ProRule" id="PRU00214"/>
    </source>
</evidence>
<evidence type="ECO:0000305" key="4"/>
<sequence>MQIFVKTLTGKTITLEVEPSDTIENVKAKIQDKEGIPPDQQRLIFAGKQLEDGRTLSDYNIQKESTLHLVLRLRGGMQIFVKTLTGKTITLEVEPSDTIENVKAKIQDKEGIPPDQQRLIFAGKQLEDGRTLSDYNIQKESTLHLVLRLRGGMQIFVKTLTGKTITLEVEPSDTIENVKAKIQDKEGIPPDQQRLIFAGKQLEDGRTLSDYNIQKESTLHLVLRLRGGC</sequence>
<proteinExistence type="inferred from homology"/>
<dbReference type="EMBL" id="AB089620">
    <property type="protein sequence ID" value="BAC56958.1"/>
    <property type="molecule type" value="Genomic_DNA"/>
</dbReference>
<dbReference type="RefSeq" id="XP_004042260.1">
    <property type="nucleotide sequence ID" value="XM_004042212.5"/>
</dbReference>
<dbReference type="RefSeq" id="XP_004042263.1">
    <property type="nucleotide sequence ID" value="XM_004042215.5"/>
</dbReference>
<dbReference type="RefSeq" id="XP_004042264.1">
    <property type="nucleotide sequence ID" value="XM_004042216.5"/>
</dbReference>
<dbReference type="SMR" id="P0CG67"/>
<dbReference type="FunCoup" id="P0CG67">
    <property type="interactions" value="1978"/>
</dbReference>
<dbReference type="GeneID" id="101144449"/>
<dbReference type="KEGG" id="ggo:101144449"/>
<dbReference type="CTD" id="7314"/>
<dbReference type="eggNOG" id="KOG0001">
    <property type="taxonomic scope" value="Eukaryota"/>
</dbReference>
<dbReference type="HOGENOM" id="CLU_010412_0_0_1"/>
<dbReference type="InParanoid" id="P0CG67"/>
<dbReference type="OrthoDB" id="2574at9604"/>
<dbReference type="Proteomes" id="UP000001519">
    <property type="component" value="Unplaced"/>
</dbReference>
<dbReference type="GO" id="GO:0005737">
    <property type="term" value="C:cytoplasm"/>
    <property type="evidence" value="ECO:0000318"/>
    <property type="project" value="GO_Central"/>
</dbReference>
<dbReference type="GO" id="GO:0005741">
    <property type="term" value="C:mitochondrial outer membrane"/>
    <property type="evidence" value="ECO:0007669"/>
    <property type="project" value="UniProtKB-SubCell"/>
</dbReference>
<dbReference type="GO" id="GO:0005634">
    <property type="term" value="C:nucleus"/>
    <property type="evidence" value="ECO:0000318"/>
    <property type="project" value="GO_Central"/>
</dbReference>
<dbReference type="GO" id="GO:0031386">
    <property type="term" value="F:protein tag activity"/>
    <property type="evidence" value="ECO:0000318"/>
    <property type="project" value="GO_Central"/>
</dbReference>
<dbReference type="GO" id="GO:0003735">
    <property type="term" value="F:structural constituent of ribosome"/>
    <property type="evidence" value="ECO:0000318"/>
    <property type="project" value="GO_Central"/>
</dbReference>
<dbReference type="GO" id="GO:0031625">
    <property type="term" value="F:ubiquitin protein ligase binding"/>
    <property type="evidence" value="ECO:0000318"/>
    <property type="project" value="GO_Central"/>
</dbReference>
<dbReference type="GO" id="GO:0019941">
    <property type="term" value="P:modification-dependent protein catabolic process"/>
    <property type="evidence" value="ECO:0000318"/>
    <property type="project" value="GO_Central"/>
</dbReference>
<dbReference type="GO" id="GO:0016567">
    <property type="term" value="P:protein ubiquitination"/>
    <property type="evidence" value="ECO:0000318"/>
    <property type="project" value="GO_Central"/>
</dbReference>
<dbReference type="CDD" id="cd01803">
    <property type="entry name" value="Ubl_ubiquitin"/>
    <property type="match status" value="3"/>
</dbReference>
<dbReference type="FunFam" id="3.10.20.90:FF:000158">
    <property type="entry name" value="Polyubiquitin 5"/>
    <property type="match status" value="3"/>
</dbReference>
<dbReference type="Gene3D" id="3.10.20.90">
    <property type="entry name" value="Phosphatidylinositol 3-kinase Catalytic Subunit, Chain A, domain 1"/>
    <property type="match status" value="3"/>
</dbReference>
<dbReference type="InterPro" id="IPR000626">
    <property type="entry name" value="Ubiquitin-like_dom"/>
</dbReference>
<dbReference type="InterPro" id="IPR029071">
    <property type="entry name" value="Ubiquitin-like_domsf"/>
</dbReference>
<dbReference type="InterPro" id="IPR019954">
    <property type="entry name" value="Ubiquitin_CS"/>
</dbReference>
<dbReference type="InterPro" id="IPR019956">
    <property type="entry name" value="Ubiquitin_dom"/>
</dbReference>
<dbReference type="InterPro" id="IPR050158">
    <property type="entry name" value="Ubiquitin_ubiquitin-like"/>
</dbReference>
<dbReference type="PANTHER" id="PTHR10666">
    <property type="entry name" value="UBIQUITIN"/>
    <property type="match status" value="1"/>
</dbReference>
<dbReference type="Pfam" id="PF00240">
    <property type="entry name" value="ubiquitin"/>
    <property type="match status" value="3"/>
</dbReference>
<dbReference type="PRINTS" id="PR00348">
    <property type="entry name" value="UBIQUITIN"/>
</dbReference>
<dbReference type="SMART" id="SM00213">
    <property type="entry name" value="UBQ"/>
    <property type="match status" value="3"/>
</dbReference>
<dbReference type="SUPFAM" id="SSF54236">
    <property type="entry name" value="Ubiquitin-like"/>
    <property type="match status" value="3"/>
</dbReference>
<dbReference type="PROSITE" id="PS00299">
    <property type="entry name" value="UBIQUITIN_1"/>
    <property type="match status" value="3"/>
</dbReference>
<dbReference type="PROSITE" id="PS50053">
    <property type="entry name" value="UBIQUITIN_2"/>
    <property type="match status" value="3"/>
</dbReference>
<accession>P0CG67</accession>
<accession>Q867C2</accession>
<accession>Q867C6</accession>
<feature type="chain" id="PRO_0000396158" description="Ubiquitin">
    <location>
        <begin position="1"/>
        <end position="76"/>
    </location>
</feature>
<feature type="chain" id="PRO_0000396159" description="Ubiquitin">
    <location>
        <begin position="77"/>
        <end position="152"/>
    </location>
</feature>
<feature type="chain" id="PRO_0000396160" description="Ubiquitin">
    <location>
        <begin position="153"/>
        <end position="228"/>
    </location>
</feature>
<feature type="propeptide" id="PRO_0000396161">
    <location>
        <position position="229"/>
    </location>
</feature>
<feature type="domain" description="Ubiquitin-like 1" evidence="3">
    <location>
        <begin position="1"/>
        <end position="76"/>
    </location>
</feature>
<feature type="domain" description="Ubiquitin-like 2" evidence="3">
    <location>
        <begin position="77"/>
        <end position="152"/>
    </location>
</feature>
<feature type="domain" description="Ubiquitin-like 3" evidence="3">
    <location>
        <begin position="153"/>
        <end position="228"/>
    </location>
</feature>
<feature type="site" description="Interacts with activating enzyme">
    <location>
        <position position="54"/>
    </location>
</feature>
<feature type="site" description="Essential for function">
    <location>
        <position position="68"/>
    </location>
</feature>
<feature type="site" description="Interacts with activating enzyme">
    <location>
        <position position="72"/>
    </location>
</feature>
<feature type="modified residue" description="Phosphoserine; by PINK1" evidence="2">
    <location>
        <position position="65"/>
    </location>
</feature>
<feature type="modified residue" description="ADP-ribosylglycine" evidence="2">
    <location>
        <position position="76"/>
    </location>
</feature>
<feature type="cross-link" description="Glycyl lysine isopeptide (Lys-Gly) (interchain with G-Cter in ubiquitin)" evidence="2">
    <location>
        <position position="6"/>
    </location>
</feature>
<feature type="cross-link" description="Glycyl lysine isopeptide (Lys-Gly) (interchain with G-Cter in ubiquitin)" evidence="2">
    <location>
        <position position="11"/>
    </location>
</feature>
<feature type="cross-link" description="Glycyl lysine isopeptide (Lys-Gly) (interchain with G-Cter in ubiquitin)" evidence="2">
    <location>
        <position position="27"/>
    </location>
</feature>
<feature type="cross-link" description="Glycyl lysine isopeptide (Lys-Gly) (interchain with G-Cter in ubiquitin)" evidence="2">
    <location>
        <position position="29"/>
    </location>
</feature>
<feature type="cross-link" description="Glycyl lysine isopeptide (Lys-Gly) (interchain with G-Cter in ubiquitin)" evidence="2">
    <location>
        <position position="33"/>
    </location>
</feature>
<feature type="cross-link" description="Glycyl lysine isopeptide (Lys-Gly) (interchain with G-Cter in ubiquitin)" evidence="2">
    <location>
        <position position="48"/>
    </location>
</feature>
<feature type="cross-link" description="Glycyl lysine isopeptide (Lys-Gly) (interchain with G-Cter in ubiquitin)" evidence="2">
    <location>
        <position position="63"/>
    </location>
</feature>
<feature type="cross-link" description="Glycyl lysine isopeptide (Gly-Lys) (interchain with K-? in acceptor proteins)" evidence="3">
    <location>
        <position position="76"/>
    </location>
</feature>
<keyword id="KW-0013">ADP-ribosylation</keyword>
<keyword id="KW-0963">Cytoplasm</keyword>
<keyword id="KW-1017">Isopeptide bond</keyword>
<keyword id="KW-0472">Membrane</keyword>
<keyword id="KW-0496">Mitochondrion</keyword>
<keyword id="KW-1000">Mitochondrion outer membrane</keyword>
<keyword id="KW-0539">Nucleus</keyword>
<keyword id="KW-0597">Phosphoprotein</keyword>
<keyword id="KW-1185">Reference proteome</keyword>
<keyword id="KW-0677">Repeat</keyword>
<keyword id="KW-0832">Ubl conjugation</keyword>